<reference key="1">
    <citation type="submission" date="2006-06" db="EMBL/GenBank/DDBJ databases">
        <title>Complete sequence of chromosome of Mycobacterium sp. MCS.</title>
        <authorList>
            <consortium name="US DOE Joint Genome Institute"/>
            <person name="Copeland A."/>
            <person name="Lucas S."/>
            <person name="Lapidus A."/>
            <person name="Barry K."/>
            <person name="Detter J.C."/>
            <person name="Glavina del Rio T."/>
            <person name="Hammon N."/>
            <person name="Israni S."/>
            <person name="Dalin E."/>
            <person name="Tice H."/>
            <person name="Pitluck S."/>
            <person name="Martinez M."/>
            <person name="Schmutz J."/>
            <person name="Larimer F."/>
            <person name="Land M."/>
            <person name="Hauser L."/>
            <person name="Kyrpides N."/>
            <person name="Kim E."/>
            <person name="Miller C.D."/>
            <person name="Hughes J.E."/>
            <person name="Anderson A.J."/>
            <person name="Sims R.C."/>
            <person name="Richardson P."/>
        </authorList>
    </citation>
    <scope>NUCLEOTIDE SEQUENCE [LARGE SCALE GENOMIC DNA]</scope>
    <source>
        <strain>MCS</strain>
    </source>
</reference>
<gene>
    <name evidence="1" type="primary">prcB</name>
    <name type="ordered locus">Mmcs_3130</name>
</gene>
<accession>Q1B797</accession>
<comment type="function">
    <text evidence="1">Component of the proteasome core, a large protease complex with broad specificity involved in protein degradation.</text>
</comment>
<comment type="catalytic activity">
    <reaction evidence="1">
        <text>Cleavage of peptide bonds with very broad specificity.</text>
        <dbReference type="EC" id="3.4.25.1"/>
    </reaction>
</comment>
<comment type="activity regulation">
    <text evidence="1">The formation of the proteasomal ATPase ARC-20S proteasome complex, likely via the docking of the C-termini of ARC into the intersubunit pockets in the alpha-rings, may trigger opening of the gate for substrate entry. Interconversion between the open-gate and close-gate conformations leads to a dynamic regulation of the 20S proteasome proteolysis activity.</text>
</comment>
<comment type="pathway">
    <text evidence="1">Protein degradation; proteasomal Pup-dependent pathway.</text>
</comment>
<comment type="subunit">
    <text evidence="1">The 20S proteasome core is composed of 14 alpha and 14 beta subunits that assemble into four stacked heptameric rings, resulting in a barrel-shaped structure. The two inner rings, each composed of seven catalytic beta subunits, are sandwiched by two outer rings, each composed of seven alpha subunits. The catalytic chamber with the active sites is on the inside of the barrel. Has a gated structure, the ends of the cylinder being occluded by the N-termini of the alpha-subunits. Is capped by the proteasome-associated ATPase, ARC.</text>
</comment>
<comment type="subcellular location">
    <subcellularLocation>
        <location evidence="1">Cytoplasm</location>
    </subcellularLocation>
</comment>
<comment type="similarity">
    <text evidence="1">Belongs to the peptidase T1B family.</text>
</comment>
<name>PSB_MYCSS</name>
<organism>
    <name type="scientific">Mycobacterium sp. (strain MCS)</name>
    <dbReference type="NCBI Taxonomy" id="164756"/>
    <lineage>
        <taxon>Bacteria</taxon>
        <taxon>Bacillati</taxon>
        <taxon>Actinomycetota</taxon>
        <taxon>Actinomycetes</taxon>
        <taxon>Mycobacteriales</taxon>
        <taxon>Mycobacteriaceae</taxon>
        <taxon>Mycobacterium</taxon>
    </lineage>
</organism>
<evidence type="ECO:0000255" key="1">
    <source>
        <dbReference type="HAMAP-Rule" id="MF_02113"/>
    </source>
</evidence>
<dbReference type="EC" id="3.4.25.1" evidence="1"/>
<dbReference type="EMBL" id="CP000384">
    <property type="protein sequence ID" value="ABG09237.1"/>
    <property type="molecule type" value="Genomic_DNA"/>
</dbReference>
<dbReference type="SMR" id="Q1B797"/>
<dbReference type="MEROPS" id="T01.005"/>
<dbReference type="KEGG" id="mmc:Mmcs_3130"/>
<dbReference type="HOGENOM" id="CLU_035750_2_0_11"/>
<dbReference type="BioCyc" id="MSP164756:G1G6O-3194-MONOMER"/>
<dbReference type="UniPathway" id="UPA00997"/>
<dbReference type="GO" id="GO:0005737">
    <property type="term" value="C:cytoplasm"/>
    <property type="evidence" value="ECO:0007669"/>
    <property type="project" value="UniProtKB-SubCell"/>
</dbReference>
<dbReference type="GO" id="GO:0019774">
    <property type="term" value="C:proteasome core complex, beta-subunit complex"/>
    <property type="evidence" value="ECO:0007669"/>
    <property type="project" value="UniProtKB-UniRule"/>
</dbReference>
<dbReference type="GO" id="GO:0004298">
    <property type="term" value="F:threonine-type endopeptidase activity"/>
    <property type="evidence" value="ECO:0007669"/>
    <property type="project" value="UniProtKB-UniRule"/>
</dbReference>
<dbReference type="GO" id="GO:0019941">
    <property type="term" value="P:modification-dependent protein catabolic process"/>
    <property type="evidence" value="ECO:0007669"/>
    <property type="project" value="UniProtKB-UniRule"/>
</dbReference>
<dbReference type="GO" id="GO:0010498">
    <property type="term" value="P:proteasomal protein catabolic process"/>
    <property type="evidence" value="ECO:0007669"/>
    <property type="project" value="UniProtKB-UniRule"/>
</dbReference>
<dbReference type="CDD" id="cd01906">
    <property type="entry name" value="proteasome_protease_HslV"/>
    <property type="match status" value="1"/>
</dbReference>
<dbReference type="FunFam" id="3.60.20.10:FF:000046">
    <property type="entry name" value="Proteasome subunit beta"/>
    <property type="match status" value="1"/>
</dbReference>
<dbReference type="Gene3D" id="3.60.20.10">
    <property type="entry name" value="Glutamine Phosphoribosylpyrophosphate, subunit 1, domain 1"/>
    <property type="match status" value="1"/>
</dbReference>
<dbReference type="HAMAP" id="MF_02113_B">
    <property type="entry name" value="Proteasome_B_B"/>
    <property type="match status" value="1"/>
</dbReference>
<dbReference type="InterPro" id="IPR029055">
    <property type="entry name" value="Ntn_hydrolases_N"/>
</dbReference>
<dbReference type="InterPro" id="IPR001353">
    <property type="entry name" value="Proteasome_sua/b"/>
</dbReference>
<dbReference type="InterPro" id="IPR023333">
    <property type="entry name" value="Proteasome_suB-type"/>
</dbReference>
<dbReference type="InterPro" id="IPR022483">
    <property type="entry name" value="PSB_actinobac"/>
</dbReference>
<dbReference type="NCBIfam" id="TIGR03690">
    <property type="entry name" value="20S_bact_beta"/>
    <property type="match status" value="1"/>
</dbReference>
<dbReference type="PANTHER" id="PTHR32194:SF0">
    <property type="entry name" value="ATP-DEPENDENT PROTEASE SUBUNIT HSLV"/>
    <property type="match status" value="1"/>
</dbReference>
<dbReference type="PANTHER" id="PTHR32194">
    <property type="entry name" value="METALLOPROTEASE TLDD"/>
    <property type="match status" value="1"/>
</dbReference>
<dbReference type="Pfam" id="PF00227">
    <property type="entry name" value="Proteasome"/>
    <property type="match status" value="1"/>
</dbReference>
<dbReference type="SUPFAM" id="SSF56235">
    <property type="entry name" value="N-terminal nucleophile aminohydrolases (Ntn hydrolases)"/>
    <property type="match status" value="1"/>
</dbReference>
<dbReference type="PROSITE" id="PS51476">
    <property type="entry name" value="PROTEASOME_BETA_2"/>
    <property type="match status" value="1"/>
</dbReference>
<proteinExistence type="inferred from homology"/>
<keyword id="KW-0068">Autocatalytic cleavage</keyword>
<keyword id="KW-0963">Cytoplasm</keyword>
<keyword id="KW-0378">Hydrolase</keyword>
<keyword id="KW-0645">Protease</keyword>
<keyword id="KW-0647">Proteasome</keyword>
<keyword id="KW-0888">Threonine protease</keyword>
<keyword id="KW-0865">Zymogen</keyword>
<sequence length="304" mass="32266">MTWPHFEQLAFPDLSRHSSHSTTRGVPSVPMDLSSFSDMLRRQAPHLLPFRGDASLTPTDAVPHGTTIVALKFPGGVVMAGDRRATQGNMIASRDVQKVYITDDYTATGIAGTAAIAVEFARLYAVELEHYEKLEGVALTFAGKVNRLATMVRGNLGAALQGFVALPLLAGFDLDDPDPQAAGRIVSFDAAGGHNLEEEGFQSVGSGSIFAKSSMKKLYHQVTDADSALRVAVEALYDAADDDSATGGPDLVRGIFPTAVLITADGAEEVTQERIAGLAREVIQNRSRADTFGPDAHAPRGTDS</sequence>
<protein>
    <recommendedName>
        <fullName evidence="1">Proteasome subunit beta</fullName>
        <ecNumber evidence="1">3.4.25.1</ecNumber>
    </recommendedName>
    <alternativeName>
        <fullName evidence="1">20S proteasome beta subunit</fullName>
    </alternativeName>
    <alternativeName>
        <fullName evidence="1">Proteasome core protein PrcB</fullName>
    </alternativeName>
</protein>
<feature type="propeptide" id="PRO_0000397544" description="Removed in mature form; by autocatalysis" evidence="1">
    <location>
        <begin position="1"/>
        <end position="65"/>
    </location>
</feature>
<feature type="chain" id="PRO_0000397545" description="Proteasome subunit beta">
    <location>
        <begin position="66"/>
        <end position="304"/>
    </location>
</feature>
<feature type="active site" description="Nucleophile" evidence="1">
    <location>
        <position position="66"/>
    </location>
</feature>